<reference key="1">
    <citation type="journal article" date="2009" name="PLoS Genet.">
        <title>Organised genome dynamics in the Escherichia coli species results in highly diverse adaptive paths.</title>
        <authorList>
            <person name="Touchon M."/>
            <person name="Hoede C."/>
            <person name="Tenaillon O."/>
            <person name="Barbe V."/>
            <person name="Baeriswyl S."/>
            <person name="Bidet P."/>
            <person name="Bingen E."/>
            <person name="Bonacorsi S."/>
            <person name="Bouchier C."/>
            <person name="Bouvet O."/>
            <person name="Calteau A."/>
            <person name="Chiapello H."/>
            <person name="Clermont O."/>
            <person name="Cruveiller S."/>
            <person name="Danchin A."/>
            <person name="Diard M."/>
            <person name="Dossat C."/>
            <person name="Karoui M.E."/>
            <person name="Frapy E."/>
            <person name="Garry L."/>
            <person name="Ghigo J.M."/>
            <person name="Gilles A.M."/>
            <person name="Johnson J."/>
            <person name="Le Bouguenec C."/>
            <person name="Lescat M."/>
            <person name="Mangenot S."/>
            <person name="Martinez-Jehanne V."/>
            <person name="Matic I."/>
            <person name="Nassif X."/>
            <person name="Oztas S."/>
            <person name="Petit M.A."/>
            <person name="Pichon C."/>
            <person name="Rouy Z."/>
            <person name="Ruf C.S."/>
            <person name="Schneider D."/>
            <person name="Tourret J."/>
            <person name="Vacherie B."/>
            <person name="Vallenet D."/>
            <person name="Medigue C."/>
            <person name="Rocha E.P.C."/>
            <person name="Denamur E."/>
        </authorList>
    </citation>
    <scope>NUCLEOTIDE SEQUENCE [LARGE SCALE GENOMIC DNA]</scope>
    <source>
        <strain>IAI39 / ExPEC</strain>
    </source>
</reference>
<accession>B7NT44</accession>
<proteinExistence type="inferred from homology"/>
<organism>
    <name type="scientific">Escherichia coli O7:K1 (strain IAI39 / ExPEC)</name>
    <dbReference type="NCBI Taxonomy" id="585057"/>
    <lineage>
        <taxon>Bacteria</taxon>
        <taxon>Pseudomonadati</taxon>
        <taxon>Pseudomonadota</taxon>
        <taxon>Gammaproteobacteria</taxon>
        <taxon>Enterobacterales</taxon>
        <taxon>Enterobacteriaceae</taxon>
        <taxon>Escherichia</taxon>
    </lineage>
</organism>
<evidence type="ECO:0000255" key="1">
    <source>
        <dbReference type="HAMAP-Rule" id="MF_01246"/>
    </source>
</evidence>
<protein>
    <recommendedName>
        <fullName evidence="1">Chitooligosaccharide deacetylase</fullName>
        <shortName evidence="1">COD</shortName>
        <ecNumber evidence="1">3.5.1.105</ecNumber>
    </recommendedName>
    <alternativeName>
        <fullName evidence="1">Chitin disaccharide deacetylase</fullName>
    </alternativeName>
    <alternativeName>
        <fullName evidence="1">Chitobiose deacetylase</fullName>
    </alternativeName>
    <alternativeName>
        <fullName evidence="1">Chitobiose-6P deacetylase</fullName>
    </alternativeName>
    <alternativeName>
        <fullName evidence="1">Chitotriose deacetylase</fullName>
    </alternativeName>
    <alternativeName>
        <fullName evidence="1">Chitotriose-6P deacetylase</fullName>
    </alternativeName>
</protein>
<feature type="chain" id="PRO_1000139821" description="Chitooligosaccharide deacetylase">
    <location>
        <begin position="1"/>
        <end position="249"/>
    </location>
</feature>
<feature type="binding site" evidence="1">
    <location>
        <position position="61"/>
    </location>
    <ligand>
        <name>Mg(2+)</name>
        <dbReference type="ChEBI" id="CHEBI:18420"/>
    </ligand>
</feature>
<feature type="binding site" evidence="1">
    <location>
        <position position="125"/>
    </location>
    <ligand>
        <name>Mg(2+)</name>
        <dbReference type="ChEBI" id="CHEBI:18420"/>
    </ligand>
</feature>
<keyword id="KW-0119">Carbohydrate metabolism</keyword>
<keyword id="KW-0146">Chitin degradation</keyword>
<keyword id="KW-0963">Cytoplasm</keyword>
<keyword id="KW-0378">Hydrolase</keyword>
<keyword id="KW-0460">Magnesium</keyword>
<keyword id="KW-0479">Metal-binding</keyword>
<keyword id="KW-0624">Polysaccharide degradation</keyword>
<comment type="function">
    <text evidence="1">Involved in the degradation of chitin. ChbG is essential for growth on the acetylated chitooligosaccharides chitobiose and chitotriose but is dispensable for growth on cellobiose and chitosan dimer, the deacetylated form of chitobiose. Deacetylation of chitobiose-6-P and chitotriose-6-P is necessary for both the activation of the chb promoter by the regulatory protein ChbR and the hydrolysis of phosphorylated beta-glucosides by the phospho-beta-glucosidase ChbF. Catalyzes the removal of only one acetyl group from chitobiose-6-P to yield monoacetylchitobiose-6-P, the inducer of ChbR and the substrate of ChbF.</text>
</comment>
<comment type="catalytic activity">
    <reaction evidence="1">
        <text>N,N'-diacetylchitobiose + H2O = N-acetyl-beta-D-glucosaminyl-(1-&gt;4)-D-glucosamine + acetate</text>
        <dbReference type="Rhea" id="RHEA:27469"/>
        <dbReference type="ChEBI" id="CHEBI:15377"/>
        <dbReference type="ChEBI" id="CHEBI:28681"/>
        <dbReference type="ChEBI" id="CHEBI:30089"/>
        <dbReference type="ChEBI" id="CHEBI:59910"/>
        <dbReference type="EC" id="3.5.1.105"/>
    </reaction>
</comment>
<comment type="catalytic activity">
    <reaction evidence="1">
        <text>diacetylchitobiose-6'-phosphate + H2O = N'-monoacetylchitobiose-6'-phosphate + acetate</text>
        <dbReference type="Rhea" id="RHEA:35083"/>
        <dbReference type="ChEBI" id="CHEBI:15377"/>
        <dbReference type="ChEBI" id="CHEBI:30089"/>
        <dbReference type="ChEBI" id="CHEBI:64883"/>
        <dbReference type="ChEBI" id="CHEBI:71315"/>
    </reaction>
</comment>
<comment type="cofactor">
    <cofactor evidence="1">
        <name>Mg(2+)</name>
        <dbReference type="ChEBI" id="CHEBI:18420"/>
    </cofactor>
</comment>
<comment type="pathway">
    <text evidence="1">Glycan degradation; chitin degradation.</text>
</comment>
<comment type="subunit">
    <text evidence="1">Homodimer.</text>
</comment>
<comment type="subcellular location">
    <subcellularLocation>
        <location evidence="1">Cytoplasm</location>
    </subcellularLocation>
</comment>
<comment type="similarity">
    <text evidence="1">Belongs to the YdjC deacetylase family. ChbG subfamily.</text>
</comment>
<sequence length="249" mass="27899">MERLLIVNADDFGLSKGQNYGIIEACRNGIVTSTTALVNGQAIDHAVQLSRDEPSLAIGMHFVLTMGKPLTAMPGLTRDGVLGKWIWQLAEEDALPLEEITQELASQYLRFIELFGRKPTHLDSHHHVHMFPQIFPIVARFAAEEGIALRADRQMVFDLPVNLRTTQGFSSAFYGEEISESLFLQVLDDSSHRGERSLEVMCHPAFIDNTIRQSAYCFPRLTELDVLTSASLKYAIAERGYRLGSYLDV</sequence>
<gene>
    <name evidence="1" type="primary">chbG</name>
    <name type="ordered locus">ECIAI39_1321</name>
</gene>
<dbReference type="EC" id="3.5.1.105" evidence="1"/>
<dbReference type="EMBL" id="CU928164">
    <property type="protein sequence ID" value="CAR17455.1"/>
    <property type="molecule type" value="Genomic_DNA"/>
</dbReference>
<dbReference type="RefSeq" id="WP_000440438.1">
    <property type="nucleotide sequence ID" value="NC_011750.1"/>
</dbReference>
<dbReference type="RefSeq" id="YP_002407329.1">
    <property type="nucleotide sequence ID" value="NC_011750.1"/>
</dbReference>
<dbReference type="SMR" id="B7NT44"/>
<dbReference type="STRING" id="585057.ECIAI39_1321"/>
<dbReference type="KEGG" id="ect:ECIAI39_1321"/>
<dbReference type="PATRIC" id="fig|585057.6.peg.1383"/>
<dbReference type="HOGENOM" id="CLU_064244_4_1_6"/>
<dbReference type="UniPathway" id="UPA00349"/>
<dbReference type="Proteomes" id="UP000000749">
    <property type="component" value="Chromosome"/>
</dbReference>
<dbReference type="GO" id="GO:0005737">
    <property type="term" value="C:cytoplasm"/>
    <property type="evidence" value="ECO:0007669"/>
    <property type="project" value="UniProtKB-SubCell"/>
</dbReference>
<dbReference type="GO" id="GO:0036311">
    <property type="term" value="F:chitin disaccharide deacetylase activity"/>
    <property type="evidence" value="ECO:0007669"/>
    <property type="project" value="UniProtKB-UniRule"/>
</dbReference>
<dbReference type="GO" id="GO:0019213">
    <property type="term" value="F:deacetylase activity"/>
    <property type="evidence" value="ECO:0007669"/>
    <property type="project" value="TreeGrafter"/>
</dbReference>
<dbReference type="GO" id="GO:0046872">
    <property type="term" value="F:metal ion binding"/>
    <property type="evidence" value="ECO:0007669"/>
    <property type="project" value="UniProtKB-KW"/>
</dbReference>
<dbReference type="GO" id="GO:0006032">
    <property type="term" value="P:chitin catabolic process"/>
    <property type="evidence" value="ECO:0007669"/>
    <property type="project" value="UniProtKB-UniPathway"/>
</dbReference>
<dbReference type="GO" id="GO:0052777">
    <property type="term" value="P:diacetylchitobiose catabolic process"/>
    <property type="evidence" value="ECO:0007669"/>
    <property type="project" value="UniProtKB-UniRule"/>
</dbReference>
<dbReference type="GO" id="GO:0000272">
    <property type="term" value="P:polysaccharide catabolic process"/>
    <property type="evidence" value="ECO:0007669"/>
    <property type="project" value="UniProtKB-UniRule"/>
</dbReference>
<dbReference type="CDD" id="cd10803">
    <property type="entry name" value="YdjC_EF3048_like"/>
    <property type="match status" value="1"/>
</dbReference>
<dbReference type="FunFam" id="3.20.20.370:FF:000001">
    <property type="entry name" value="Chitooligosaccharide deacetylase"/>
    <property type="match status" value="1"/>
</dbReference>
<dbReference type="Gene3D" id="3.20.20.370">
    <property type="entry name" value="Glycoside hydrolase/deacetylase"/>
    <property type="match status" value="1"/>
</dbReference>
<dbReference type="HAMAP" id="MF_01246">
    <property type="entry name" value="COD"/>
    <property type="match status" value="1"/>
</dbReference>
<dbReference type="InterPro" id="IPR022948">
    <property type="entry name" value="COD_ChbG_bac"/>
</dbReference>
<dbReference type="InterPro" id="IPR011330">
    <property type="entry name" value="Glyco_hydro/deAcase_b/a-brl"/>
</dbReference>
<dbReference type="InterPro" id="IPR006879">
    <property type="entry name" value="YdjC-like"/>
</dbReference>
<dbReference type="NCBIfam" id="NF002559">
    <property type="entry name" value="PRK02134.1"/>
    <property type="match status" value="1"/>
</dbReference>
<dbReference type="PANTHER" id="PTHR31609:SF1">
    <property type="entry name" value="CARBOHYDRATE DEACETYLASE"/>
    <property type="match status" value="1"/>
</dbReference>
<dbReference type="PANTHER" id="PTHR31609">
    <property type="entry name" value="YDJC DEACETYLASE FAMILY MEMBER"/>
    <property type="match status" value="1"/>
</dbReference>
<dbReference type="Pfam" id="PF04794">
    <property type="entry name" value="YdjC"/>
    <property type="match status" value="1"/>
</dbReference>
<dbReference type="SUPFAM" id="SSF88713">
    <property type="entry name" value="Glycoside hydrolase/deacetylase"/>
    <property type="match status" value="1"/>
</dbReference>
<name>CHBG_ECO7I</name>